<sequence length="272" mass="31202">MWLRVTTFPDKEMAMEIASKLRNSGARVEVREIVEWDFEERYFLRGNLSELEEYEEAQDWKNYSEIIREILKGRMEVSEFEREFLKRASPENYEKVVKLKDESLGDKEFLDAMEAAFRVSLLMSSVYSFLKANGIEVGEDYIEGELPEDPTIIIELDEEVEGCEKGYFLQLTPAWDVNVDILSVLTKDVELEGLDGVVIDAAARIVMNVIAGLEDTNDIEKLREYTSGIIEDADNLDGELYVDAEEVYEAILKSLEKAGIVRVSGRKVKLRK</sequence>
<gene>
    <name type="ordered locus">AF_0408</name>
</gene>
<organism>
    <name type="scientific">Archaeoglobus fulgidus (strain ATCC 49558 / DSM 4304 / JCM 9628 / NBRC 100126 / VC-16)</name>
    <dbReference type="NCBI Taxonomy" id="224325"/>
    <lineage>
        <taxon>Archaea</taxon>
        <taxon>Methanobacteriati</taxon>
        <taxon>Methanobacteriota</taxon>
        <taxon>Archaeoglobi</taxon>
        <taxon>Archaeoglobales</taxon>
        <taxon>Archaeoglobaceae</taxon>
        <taxon>Archaeoglobus</taxon>
    </lineage>
</organism>
<dbReference type="EMBL" id="AE000782">
    <property type="protein sequence ID" value="AAB90834.1"/>
    <property type="molecule type" value="Genomic_DNA"/>
</dbReference>
<dbReference type="PIR" id="H69300">
    <property type="entry name" value="H69300"/>
</dbReference>
<dbReference type="RefSeq" id="WP_010877915.1">
    <property type="nucleotide sequence ID" value="NC_000917.1"/>
</dbReference>
<dbReference type="SMR" id="O29839"/>
<dbReference type="STRING" id="224325.AF_0408"/>
<dbReference type="PaxDb" id="224325-AF_0408"/>
<dbReference type="EnsemblBacteria" id="AAB90834">
    <property type="protein sequence ID" value="AAB90834"/>
    <property type="gene ID" value="AF_0408"/>
</dbReference>
<dbReference type="GeneID" id="1483624"/>
<dbReference type="KEGG" id="afu:AF_0408"/>
<dbReference type="eggNOG" id="arCOG10355">
    <property type="taxonomic scope" value="Archaea"/>
</dbReference>
<dbReference type="HOGENOM" id="CLU_1021573_0_0_2"/>
<dbReference type="Proteomes" id="UP000002199">
    <property type="component" value="Chromosome"/>
</dbReference>
<name>Y408_ARCFU</name>
<proteinExistence type="predicted"/>
<protein>
    <recommendedName>
        <fullName>Uncharacterized protein AF_0408</fullName>
    </recommendedName>
</protein>
<accession>O29839</accession>
<keyword id="KW-1185">Reference proteome</keyword>
<reference key="1">
    <citation type="journal article" date="1997" name="Nature">
        <title>The complete genome sequence of the hyperthermophilic, sulphate-reducing archaeon Archaeoglobus fulgidus.</title>
        <authorList>
            <person name="Klenk H.-P."/>
            <person name="Clayton R.A."/>
            <person name="Tomb J.-F."/>
            <person name="White O."/>
            <person name="Nelson K.E."/>
            <person name="Ketchum K.A."/>
            <person name="Dodson R.J."/>
            <person name="Gwinn M.L."/>
            <person name="Hickey E.K."/>
            <person name="Peterson J.D."/>
            <person name="Richardson D.L."/>
            <person name="Kerlavage A.R."/>
            <person name="Graham D.E."/>
            <person name="Kyrpides N.C."/>
            <person name="Fleischmann R.D."/>
            <person name="Quackenbush J."/>
            <person name="Lee N.H."/>
            <person name="Sutton G.G."/>
            <person name="Gill S.R."/>
            <person name="Kirkness E.F."/>
            <person name="Dougherty B.A."/>
            <person name="McKenney K."/>
            <person name="Adams M.D."/>
            <person name="Loftus B.J."/>
            <person name="Peterson S.N."/>
            <person name="Reich C.I."/>
            <person name="McNeil L.K."/>
            <person name="Badger J.H."/>
            <person name="Glodek A."/>
            <person name="Zhou L."/>
            <person name="Overbeek R."/>
            <person name="Gocayne J.D."/>
            <person name="Weidman J.F."/>
            <person name="McDonald L.A."/>
            <person name="Utterback T.R."/>
            <person name="Cotton M.D."/>
            <person name="Spriggs T."/>
            <person name="Artiach P."/>
            <person name="Kaine B.P."/>
            <person name="Sykes S.M."/>
            <person name="Sadow P.W."/>
            <person name="D'Andrea K.P."/>
            <person name="Bowman C."/>
            <person name="Fujii C."/>
            <person name="Garland S.A."/>
            <person name="Mason T.M."/>
            <person name="Olsen G.J."/>
            <person name="Fraser C.M."/>
            <person name="Smith H.O."/>
            <person name="Woese C.R."/>
            <person name="Venter J.C."/>
        </authorList>
    </citation>
    <scope>NUCLEOTIDE SEQUENCE [LARGE SCALE GENOMIC DNA]</scope>
    <source>
        <strain>ATCC 49558 / DSM 4304 / JCM 9628 / NBRC 100126 / VC-16</strain>
    </source>
</reference>
<feature type="chain" id="PRO_0000127872" description="Uncharacterized protein AF_0408">
    <location>
        <begin position="1"/>
        <end position="272"/>
    </location>
</feature>